<feature type="chain" id="PRO_0000139149" description="Methionine--tRNA ligase">
    <location>
        <begin position="1"/>
        <end position="682"/>
    </location>
</feature>
<feature type="domain" description="tRNA-binding" evidence="1">
    <location>
        <begin position="580"/>
        <end position="682"/>
    </location>
</feature>
<feature type="short sequence motif" description="'HIGH' region">
    <location>
        <begin position="15"/>
        <end position="25"/>
    </location>
</feature>
<feature type="short sequence motif" description="'KMSKS' region">
    <location>
        <begin position="331"/>
        <end position="335"/>
    </location>
</feature>
<feature type="binding site" evidence="1">
    <location>
        <position position="146"/>
    </location>
    <ligand>
        <name>Zn(2+)</name>
        <dbReference type="ChEBI" id="CHEBI:29105"/>
    </ligand>
</feature>
<feature type="binding site" evidence="1">
    <location>
        <position position="149"/>
    </location>
    <ligand>
        <name>Zn(2+)</name>
        <dbReference type="ChEBI" id="CHEBI:29105"/>
    </ligand>
</feature>
<feature type="binding site" evidence="1">
    <location>
        <position position="159"/>
    </location>
    <ligand>
        <name>Zn(2+)</name>
        <dbReference type="ChEBI" id="CHEBI:29105"/>
    </ligand>
</feature>
<feature type="binding site" evidence="1">
    <location>
        <position position="162"/>
    </location>
    <ligand>
        <name>Zn(2+)</name>
        <dbReference type="ChEBI" id="CHEBI:29105"/>
    </ligand>
</feature>
<feature type="binding site" evidence="1">
    <location>
        <position position="334"/>
    </location>
    <ligand>
        <name>ATP</name>
        <dbReference type="ChEBI" id="CHEBI:30616"/>
    </ligand>
</feature>
<sequence>MANSARDILVTCALPYANGAIHLGHLLEHIQADIWVRFQRMRGHKVHFICADDAHGTPIMLNADKLGITPEALIARSKADHVADFEGFNISYDNYHSTHSPENEALTAEMYKKLRANGFIKSRTISQLFDPEKGMFLPDRFVKGTCPKCKAEDQYGDNCEVCSSTYSPTELINPRSVVSGATPVLKESEHFFFDLPAFEGMLKAWIKSGSLQPEIANKMQEWFESGLQQWDISRDAPYFGFKIPDTEDKYFYVWLDAPIGYMASFKNLCDKTGLNFDDFWKKDSSAELYHFIGKDIVYFHSLFWPAMLDGCDLRKPTNVFAHGYVTVNGVKMSKSRGTFIQASTYLRHLAPEYLRYYYAAKLNNRIEDLDLNLEDFVQRLNADVVNKFVNLASRSAGFITKRFDGKLSAEIAEPELLAEFVEKAAQIATYYEEREFGKVVREVMQLADKANKYIDDKAPWVMAKEEGREAELQAVCSMALQLFRVLAIYLKPVIPQIIARAEAFLQDELTWESLNRPLLNHAILPFKALAQRLDPKQIEAIVNETKEQFVAQQALEQKNSAKAEPASQVEPIAETISIEDFAKLDLRVAKVMKCEAVPESNKLLRFELDLGDHTRQVFSGIKEAYNNPAELEGRFVVVIANLAPRKMRFGVSEGMILSAGTGGADLFLLNADQGVKPGMQVK</sequence>
<comment type="function">
    <text evidence="1">Is required not only for elongation of protein synthesis but also for the initiation of all mRNA translation through initiator tRNA(fMet) aminoacylation.</text>
</comment>
<comment type="catalytic activity">
    <reaction evidence="1">
        <text>tRNA(Met) + L-methionine + ATP = L-methionyl-tRNA(Met) + AMP + diphosphate</text>
        <dbReference type="Rhea" id="RHEA:13481"/>
        <dbReference type="Rhea" id="RHEA-COMP:9667"/>
        <dbReference type="Rhea" id="RHEA-COMP:9698"/>
        <dbReference type="ChEBI" id="CHEBI:30616"/>
        <dbReference type="ChEBI" id="CHEBI:33019"/>
        <dbReference type="ChEBI" id="CHEBI:57844"/>
        <dbReference type="ChEBI" id="CHEBI:78442"/>
        <dbReference type="ChEBI" id="CHEBI:78530"/>
        <dbReference type="ChEBI" id="CHEBI:456215"/>
        <dbReference type="EC" id="6.1.1.10"/>
    </reaction>
</comment>
<comment type="cofactor">
    <cofactor evidence="1">
        <name>Zn(2+)</name>
        <dbReference type="ChEBI" id="CHEBI:29105"/>
    </cofactor>
    <text evidence="1">Binds 1 zinc ion per subunit.</text>
</comment>
<comment type="subunit">
    <text evidence="1">Homodimer.</text>
</comment>
<comment type="subcellular location">
    <subcellularLocation>
        <location evidence="1">Cytoplasm</location>
    </subcellularLocation>
</comment>
<comment type="similarity">
    <text evidence="1">Belongs to the class-I aminoacyl-tRNA synthetase family. MetG type 1 subfamily.</text>
</comment>
<dbReference type="EC" id="6.1.1.10" evidence="1"/>
<dbReference type="EMBL" id="AE004439">
    <property type="protein sequence ID" value="AAK02387.1"/>
    <property type="molecule type" value="Genomic_DNA"/>
</dbReference>
<dbReference type="RefSeq" id="WP_010906575.1">
    <property type="nucleotide sequence ID" value="NC_002663.1"/>
</dbReference>
<dbReference type="SMR" id="P57838"/>
<dbReference type="STRING" id="272843.PM0303"/>
<dbReference type="EnsemblBacteria" id="AAK02387">
    <property type="protein sequence ID" value="AAK02387"/>
    <property type="gene ID" value="PM0303"/>
</dbReference>
<dbReference type="KEGG" id="pmu:PM0303"/>
<dbReference type="PATRIC" id="fig|272843.6.peg.314"/>
<dbReference type="HOGENOM" id="CLU_009710_7_0_6"/>
<dbReference type="OrthoDB" id="9810191at2"/>
<dbReference type="Proteomes" id="UP000000809">
    <property type="component" value="Chromosome"/>
</dbReference>
<dbReference type="GO" id="GO:0005829">
    <property type="term" value="C:cytosol"/>
    <property type="evidence" value="ECO:0007669"/>
    <property type="project" value="TreeGrafter"/>
</dbReference>
<dbReference type="GO" id="GO:0005524">
    <property type="term" value="F:ATP binding"/>
    <property type="evidence" value="ECO:0007669"/>
    <property type="project" value="UniProtKB-UniRule"/>
</dbReference>
<dbReference type="GO" id="GO:0046872">
    <property type="term" value="F:metal ion binding"/>
    <property type="evidence" value="ECO:0007669"/>
    <property type="project" value="UniProtKB-KW"/>
</dbReference>
<dbReference type="GO" id="GO:0004825">
    <property type="term" value="F:methionine-tRNA ligase activity"/>
    <property type="evidence" value="ECO:0007669"/>
    <property type="project" value="UniProtKB-UniRule"/>
</dbReference>
<dbReference type="GO" id="GO:0000049">
    <property type="term" value="F:tRNA binding"/>
    <property type="evidence" value="ECO:0007669"/>
    <property type="project" value="UniProtKB-KW"/>
</dbReference>
<dbReference type="GO" id="GO:0006431">
    <property type="term" value="P:methionyl-tRNA aminoacylation"/>
    <property type="evidence" value="ECO:0007669"/>
    <property type="project" value="UniProtKB-UniRule"/>
</dbReference>
<dbReference type="CDD" id="cd07957">
    <property type="entry name" value="Anticodon_Ia_Met"/>
    <property type="match status" value="1"/>
</dbReference>
<dbReference type="CDD" id="cd00814">
    <property type="entry name" value="MetRS_core"/>
    <property type="match status" value="1"/>
</dbReference>
<dbReference type="CDD" id="cd02800">
    <property type="entry name" value="tRNA_bind_EcMetRS_like"/>
    <property type="match status" value="1"/>
</dbReference>
<dbReference type="FunFam" id="1.10.730.10:FF:000005">
    <property type="entry name" value="Methionine--tRNA ligase"/>
    <property type="match status" value="1"/>
</dbReference>
<dbReference type="FunFam" id="2.20.28.20:FF:000001">
    <property type="entry name" value="Methionine--tRNA ligase"/>
    <property type="match status" value="1"/>
</dbReference>
<dbReference type="FunFam" id="2.40.50.140:FF:000042">
    <property type="entry name" value="Methionine--tRNA ligase"/>
    <property type="match status" value="1"/>
</dbReference>
<dbReference type="Gene3D" id="3.40.50.620">
    <property type="entry name" value="HUPs"/>
    <property type="match status" value="1"/>
</dbReference>
<dbReference type="Gene3D" id="1.10.730.10">
    <property type="entry name" value="Isoleucyl-tRNA Synthetase, Domain 1"/>
    <property type="match status" value="1"/>
</dbReference>
<dbReference type="Gene3D" id="2.20.28.20">
    <property type="entry name" value="Methionyl-tRNA synthetase, Zn-domain"/>
    <property type="match status" value="1"/>
</dbReference>
<dbReference type="Gene3D" id="2.40.50.140">
    <property type="entry name" value="Nucleic acid-binding proteins"/>
    <property type="match status" value="1"/>
</dbReference>
<dbReference type="HAMAP" id="MF_00098">
    <property type="entry name" value="Met_tRNA_synth_type1"/>
    <property type="match status" value="1"/>
</dbReference>
<dbReference type="InterPro" id="IPR001412">
    <property type="entry name" value="aa-tRNA-synth_I_CS"/>
</dbReference>
<dbReference type="InterPro" id="IPR041872">
    <property type="entry name" value="Anticodon_Met"/>
</dbReference>
<dbReference type="InterPro" id="IPR004495">
    <property type="entry name" value="Met-tRNA-synth_bsu_C"/>
</dbReference>
<dbReference type="InterPro" id="IPR023458">
    <property type="entry name" value="Met-tRNA_ligase_1"/>
</dbReference>
<dbReference type="InterPro" id="IPR014758">
    <property type="entry name" value="Met-tRNA_synth"/>
</dbReference>
<dbReference type="InterPro" id="IPR015413">
    <property type="entry name" value="Methionyl/Leucyl_tRNA_Synth"/>
</dbReference>
<dbReference type="InterPro" id="IPR033911">
    <property type="entry name" value="MetRS_core"/>
</dbReference>
<dbReference type="InterPro" id="IPR029038">
    <property type="entry name" value="MetRS_Zn"/>
</dbReference>
<dbReference type="InterPro" id="IPR012340">
    <property type="entry name" value="NA-bd_OB-fold"/>
</dbReference>
<dbReference type="InterPro" id="IPR014729">
    <property type="entry name" value="Rossmann-like_a/b/a_fold"/>
</dbReference>
<dbReference type="InterPro" id="IPR002547">
    <property type="entry name" value="tRNA-bd_dom"/>
</dbReference>
<dbReference type="InterPro" id="IPR009080">
    <property type="entry name" value="tRNAsynth_Ia_anticodon-bd"/>
</dbReference>
<dbReference type="NCBIfam" id="TIGR00398">
    <property type="entry name" value="metG"/>
    <property type="match status" value="1"/>
</dbReference>
<dbReference type="NCBIfam" id="TIGR00399">
    <property type="entry name" value="metG_C_term"/>
    <property type="match status" value="1"/>
</dbReference>
<dbReference type="NCBIfam" id="NF001100">
    <property type="entry name" value="PRK00133.1"/>
    <property type="match status" value="1"/>
</dbReference>
<dbReference type="PANTHER" id="PTHR45765">
    <property type="entry name" value="METHIONINE--TRNA LIGASE"/>
    <property type="match status" value="1"/>
</dbReference>
<dbReference type="PANTHER" id="PTHR45765:SF1">
    <property type="entry name" value="METHIONINE--TRNA LIGASE, CYTOPLASMIC"/>
    <property type="match status" value="1"/>
</dbReference>
<dbReference type="Pfam" id="PF19303">
    <property type="entry name" value="Anticodon_3"/>
    <property type="match status" value="1"/>
</dbReference>
<dbReference type="Pfam" id="PF09334">
    <property type="entry name" value="tRNA-synt_1g"/>
    <property type="match status" value="1"/>
</dbReference>
<dbReference type="Pfam" id="PF01588">
    <property type="entry name" value="tRNA_bind"/>
    <property type="match status" value="1"/>
</dbReference>
<dbReference type="PRINTS" id="PR01041">
    <property type="entry name" value="TRNASYNTHMET"/>
</dbReference>
<dbReference type="SUPFAM" id="SSF47323">
    <property type="entry name" value="Anticodon-binding domain of a subclass of class I aminoacyl-tRNA synthetases"/>
    <property type="match status" value="1"/>
</dbReference>
<dbReference type="SUPFAM" id="SSF57770">
    <property type="entry name" value="Methionyl-tRNA synthetase (MetRS), Zn-domain"/>
    <property type="match status" value="1"/>
</dbReference>
<dbReference type="SUPFAM" id="SSF50249">
    <property type="entry name" value="Nucleic acid-binding proteins"/>
    <property type="match status" value="1"/>
</dbReference>
<dbReference type="SUPFAM" id="SSF52374">
    <property type="entry name" value="Nucleotidylyl transferase"/>
    <property type="match status" value="1"/>
</dbReference>
<dbReference type="PROSITE" id="PS00178">
    <property type="entry name" value="AA_TRNA_LIGASE_I"/>
    <property type="match status" value="1"/>
</dbReference>
<dbReference type="PROSITE" id="PS50886">
    <property type="entry name" value="TRBD"/>
    <property type="match status" value="1"/>
</dbReference>
<gene>
    <name evidence="1" type="primary">metG</name>
    <name type="ordered locus">PM0303</name>
</gene>
<proteinExistence type="inferred from homology"/>
<organism>
    <name type="scientific">Pasteurella multocida (strain Pm70)</name>
    <dbReference type="NCBI Taxonomy" id="272843"/>
    <lineage>
        <taxon>Bacteria</taxon>
        <taxon>Pseudomonadati</taxon>
        <taxon>Pseudomonadota</taxon>
        <taxon>Gammaproteobacteria</taxon>
        <taxon>Pasteurellales</taxon>
        <taxon>Pasteurellaceae</taxon>
        <taxon>Pasteurella</taxon>
    </lineage>
</organism>
<evidence type="ECO:0000255" key="1">
    <source>
        <dbReference type="HAMAP-Rule" id="MF_00098"/>
    </source>
</evidence>
<reference key="1">
    <citation type="journal article" date="2001" name="Proc. Natl. Acad. Sci. U.S.A.">
        <title>Complete genomic sequence of Pasteurella multocida Pm70.</title>
        <authorList>
            <person name="May B.J."/>
            <person name="Zhang Q."/>
            <person name="Li L.L."/>
            <person name="Paustian M.L."/>
            <person name="Whittam T.S."/>
            <person name="Kapur V."/>
        </authorList>
    </citation>
    <scope>NUCLEOTIDE SEQUENCE [LARGE SCALE GENOMIC DNA]</scope>
    <source>
        <strain>Pm70</strain>
    </source>
</reference>
<accession>P57838</accession>
<keyword id="KW-0030">Aminoacyl-tRNA synthetase</keyword>
<keyword id="KW-0067">ATP-binding</keyword>
<keyword id="KW-0963">Cytoplasm</keyword>
<keyword id="KW-0436">Ligase</keyword>
<keyword id="KW-0479">Metal-binding</keyword>
<keyword id="KW-0547">Nucleotide-binding</keyword>
<keyword id="KW-0648">Protein biosynthesis</keyword>
<keyword id="KW-1185">Reference proteome</keyword>
<keyword id="KW-0694">RNA-binding</keyword>
<keyword id="KW-0820">tRNA-binding</keyword>
<keyword id="KW-0862">Zinc</keyword>
<name>SYM_PASMU</name>
<protein>
    <recommendedName>
        <fullName evidence="1">Methionine--tRNA ligase</fullName>
        <ecNumber evidence="1">6.1.1.10</ecNumber>
    </recommendedName>
    <alternativeName>
        <fullName evidence="1">Methionyl-tRNA synthetase</fullName>
        <shortName evidence="1">MetRS</shortName>
    </alternativeName>
</protein>